<accession>Q7MPH9</accession>
<evidence type="ECO:0000255" key="1">
    <source>
        <dbReference type="HAMAP-Rule" id="MF_01345"/>
    </source>
</evidence>
<evidence type="ECO:0000305" key="2"/>
<name>RS17_VIBVY</name>
<dbReference type="EMBL" id="BA000037">
    <property type="protein sequence ID" value="BAC93148.1"/>
    <property type="molecule type" value="Genomic_DNA"/>
</dbReference>
<dbReference type="RefSeq" id="WP_011078824.1">
    <property type="nucleotide sequence ID" value="NC_005139.1"/>
</dbReference>
<dbReference type="SMR" id="Q7MPH9"/>
<dbReference type="STRING" id="672.VV93_v1c03550"/>
<dbReference type="GeneID" id="43685300"/>
<dbReference type="KEGG" id="vvy:VV0384"/>
<dbReference type="eggNOG" id="COG0186">
    <property type="taxonomic scope" value="Bacteria"/>
</dbReference>
<dbReference type="HOGENOM" id="CLU_073626_1_1_6"/>
<dbReference type="Proteomes" id="UP000002675">
    <property type="component" value="Chromosome I"/>
</dbReference>
<dbReference type="GO" id="GO:0022627">
    <property type="term" value="C:cytosolic small ribosomal subunit"/>
    <property type="evidence" value="ECO:0007669"/>
    <property type="project" value="TreeGrafter"/>
</dbReference>
<dbReference type="GO" id="GO:0019843">
    <property type="term" value="F:rRNA binding"/>
    <property type="evidence" value="ECO:0007669"/>
    <property type="project" value="UniProtKB-UniRule"/>
</dbReference>
<dbReference type="GO" id="GO:0003735">
    <property type="term" value="F:structural constituent of ribosome"/>
    <property type="evidence" value="ECO:0007669"/>
    <property type="project" value="InterPro"/>
</dbReference>
<dbReference type="GO" id="GO:0006412">
    <property type="term" value="P:translation"/>
    <property type="evidence" value="ECO:0007669"/>
    <property type="project" value="UniProtKB-UniRule"/>
</dbReference>
<dbReference type="CDD" id="cd00364">
    <property type="entry name" value="Ribosomal_uS17"/>
    <property type="match status" value="1"/>
</dbReference>
<dbReference type="FunFam" id="2.40.50.140:FF:000014">
    <property type="entry name" value="30S ribosomal protein S17"/>
    <property type="match status" value="1"/>
</dbReference>
<dbReference type="Gene3D" id="2.40.50.140">
    <property type="entry name" value="Nucleic acid-binding proteins"/>
    <property type="match status" value="1"/>
</dbReference>
<dbReference type="HAMAP" id="MF_01345_B">
    <property type="entry name" value="Ribosomal_uS17_B"/>
    <property type="match status" value="1"/>
</dbReference>
<dbReference type="InterPro" id="IPR012340">
    <property type="entry name" value="NA-bd_OB-fold"/>
</dbReference>
<dbReference type="InterPro" id="IPR000266">
    <property type="entry name" value="Ribosomal_uS17"/>
</dbReference>
<dbReference type="InterPro" id="IPR019984">
    <property type="entry name" value="Ribosomal_uS17_bact/chlr"/>
</dbReference>
<dbReference type="InterPro" id="IPR019979">
    <property type="entry name" value="Ribosomal_uS17_CS"/>
</dbReference>
<dbReference type="NCBIfam" id="NF004123">
    <property type="entry name" value="PRK05610.1"/>
    <property type="match status" value="1"/>
</dbReference>
<dbReference type="NCBIfam" id="TIGR03635">
    <property type="entry name" value="uS17_bact"/>
    <property type="match status" value="1"/>
</dbReference>
<dbReference type="PANTHER" id="PTHR10744">
    <property type="entry name" value="40S RIBOSOMAL PROTEIN S11 FAMILY MEMBER"/>
    <property type="match status" value="1"/>
</dbReference>
<dbReference type="PANTHER" id="PTHR10744:SF1">
    <property type="entry name" value="SMALL RIBOSOMAL SUBUNIT PROTEIN US17M"/>
    <property type="match status" value="1"/>
</dbReference>
<dbReference type="Pfam" id="PF00366">
    <property type="entry name" value="Ribosomal_S17"/>
    <property type="match status" value="1"/>
</dbReference>
<dbReference type="PRINTS" id="PR00973">
    <property type="entry name" value="RIBOSOMALS17"/>
</dbReference>
<dbReference type="SUPFAM" id="SSF50249">
    <property type="entry name" value="Nucleic acid-binding proteins"/>
    <property type="match status" value="1"/>
</dbReference>
<dbReference type="PROSITE" id="PS00056">
    <property type="entry name" value="RIBOSOMAL_S17"/>
    <property type="match status" value="1"/>
</dbReference>
<feature type="chain" id="PRO_0000233607" description="Small ribosomal subunit protein uS17">
    <location>
        <begin position="1"/>
        <end position="84"/>
    </location>
</feature>
<gene>
    <name evidence="1" type="primary">rpsQ</name>
    <name type="ordered locus">VV0384</name>
</gene>
<sequence>MSDKIRTQLGRVVSDKMDKSIVVAIERMVKHPIYGKFVKRTTKVHAHDENNECGIGDTVEIRECRPLSKTKSWTLVKVVEKAKI</sequence>
<reference key="1">
    <citation type="journal article" date="2003" name="Genome Res.">
        <title>Comparative genome analysis of Vibrio vulnificus, a marine pathogen.</title>
        <authorList>
            <person name="Chen C.-Y."/>
            <person name="Wu K.-M."/>
            <person name="Chang Y.-C."/>
            <person name="Chang C.-H."/>
            <person name="Tsai H.-C."/>
            <person name="Liao T.-L."/>
            <person name="Liu Y.-M."/>
            <person name="Chen H.-J."/>
            <person name="Shen A.B.-T."/>
            <person name="Li J.-C."/>
            <person name="Su T.-L."/>
            <person name="Shao C.-P."/>
            <person name="Lee C.-T."/>
            <person name="Hor L.-I."/>
            <person name="Tsai S.-F."/>
        </authorList>
    </citation>
    <scope>NUCLEOTIDE SEQUENCE [LARGE SCALE GENOMIC DNA]</scope>
    <source>
        <strain>YJ016</strain>
    </source>
</reference>
<keyword id="KW-0687">Ribonucleoprotein</keyword>
<keyword id="KW-0689">Ribosomal protein</keyword>
<keyword id="KW-0694">RNA-binding</keyword>
<keyword id="KW-0699">rRNA-binding</keyword>
<protein>
    <recommendedName>
        <fullName evidence="1">Small ribosomal subunit protein uS17</fullName>
    </recommendedName>
    <alternativeName>
        <fullName evidence="2">30S ribosomal protein S17</fullName>
    </alternativeName>
</protein>
<proteinExistence type="inferred from homology"/>
<organism>
    <name type="scientific">Vibrio vulnificus (strain YJ016)</name>
    <dbReference type="NCBI Taxonomy" id="196600"/>
    <lineage>
        <taxon>Bacteria</taxon>
        <taxon>Pseudomonadati</taxon>
        <taxon>Pseudomonadota</taxon>
        <taxon>Gammaproteobacteria</taxon>
        <taxon>Vibrionales</taxon>
        <taxon>Vibrionaceae</taxon>
        <taxon>Vibrio</taxon>
    </lineage>
</organism>
<comment type="function">
    <text evidence="1">One of the primary rRNA binding proteins, it binds specifically to the 5'-end of 16S ribosomal RNA.</text>
</comment>
<comment type="subunit">
    <text evidence="1">Part of the 30S ribosomal subunit.</text>
</comment>
<comment type="similarity">
    <text evidence="1">Belongs to the universal ribosomal protein uS17 family.</text>
</comment>